<comment type="function">
    <text>Variant histone H3 which replaces conventional H3 in a wide range of nucleosomes in active genes. Constitutes the predominant form of histone H3 in non-dividing cells and is incorporated into chromatin independently of DNA synthesis. Deposited at sites of nucleosomal displacement throughout transcribed genes, suggesting that it represents an epigenetic imprint of transcriptionally active chromatin. Nucleosomes wrap and compact DNA into chromatin, limiting DNA accessibility to the cellular machineries which require DNA as a template. Histones thereby play a central role in transcription regulation, DNA repair, DNA replication and chromosomal stability. DNA accessibility is regulated via a complex set of post-translational modifications of histones, also called histone code, and nucleosome remodeling.</text>
</comment>
<comment type="subunit">
    <text evidence="18 20">The nucleosome is a histone octamer containing two molecules each of H2A, H2B, H3 and H4 assembled in one H3-H4 heterotetramer and two H2A-H2B heterodimers. The octamer wraps approximately 147 bp of DNA. The H3K9meK27me dimethylated N-terminal tail of histone H3 can directly interact with the chromodomains of CMT3 and/or LHP1. Interacts with AHL27. Binds to HIRA (PubMed:25086063).</text>
</comment>
<comment type="subcellular location">
    <subcellularLocation>
        <location evidence="17 20">Nucleus</location>
    </subcellularLocation>
    <subcellularLocation>
        <location evidence="17">Chromosome</location>
    </subcellularLocation>
    <subcellularLocation>
        <location evidence="20">Nucleus</location>
        <location evidence="20">Nucleolus</location>
    </subcellularLocation>
    <text evidence="20">Localized at rDNA loci in the nucleolus.</text>
</comment>
<comment type="alternative products">
    <event type="alternative splicing"/>
    <isoform>
        <id>P59169-1</id>
        <name>1</name>
        <sequence type="displayed"/>
    </isoform>
    <text>A number of isoforms are produced. According to EST sequences.</text>
</comment>
<comment type="tissue specificity">
    <text evidence="12">Ubiquitous.</text>
</comment>
<comment type="developmental stage">
    <text evidence="7 12">Expressed in a replication-independent manner. Strong expression in the generative cell of early bicellular pollen, but not detected in late bicellular and tricellular pollen.</text>
</comment>
<comment type="PTM">
    <text evidence="4 9 14 15 16">Can be acetylated to form H3K9ac, H3K14ac, H3K18ac and H3K23ac. H3K9ac could compete with H3K9me and prevent gene silencing. H3K9acK14ac molecules are 30-fold less abundant than H3K9ac or H3K14ac. Very low level of H3K9meK14ac. H3K14 is specifically acetylated by HAG1 and deacetylated by HDA6. H3K9ac is deacetylated by HDT1. H3K9ac is restricted to euchromatin. H3K18ac, but not H3K9ac, is cell-cycle dependent and linked to replication. Reduced H4R3me2s increases H3K14ac in the FLC chromatin and activates or maintains its transcription. Vernalization decreases H3K9/14ac in the promoter region of FLC.</text>
</comment>
<comment type="PTM">
    <text evidence="3 4 6 8 9 11 13 15 17 19">Mono-, di- or trimethylated to form mainly H3K4me1/2/3, H3K9me1/2/3 and H3K36me1/2/3. Very low monomethylation at H3K18me1 or H3K23me1. H3K4me1/2/3, H3K9me3, H3K27me3 and H3K36me1/2/3 are typical marks for euchromatin, whereas heterochromatic chromocenters are enriched in H3K9me1/2 and H3K27me1/2. H3K27me3 is largely restricted to the transcribed regions of single genes and not associated with low-nucleosome density regions. SUVR1 to SUVR5, ASHH1 to ASHH3 and ASHR1 to ASHR3 methylate H3, with ASHH2 methylating specifically H3K4 and H3K36. Monomethylation at H3K27me1 by ATXR5/6 is inhibited by the presence of Thr-32. The Su(var)3-9 homolog proteins (SUVH1 to SUVH10) are H3K9-specific methyltransferases. Among them, KRYPTONITE (SUVH4) is only involved in di- or trimethylation. Regarding H3K9, the major forms are H3K9me1 (20%) and H3K9me2 (10%), while H3K9me3 is rare (0.2%). H3K9me is controlled by DNA methylation and is not required for the formation of constitutive heterochromatin, but double methylation H3K9meK27me is required for the recruitment of CMT3 to methylate heterochromatin and silence euchromatic loci. Very low level of H3K9meK14ac. 36% of H3K27 is found under the form of H3K27me1 and 6% of H3K27me2, with no detectable H3K27me3. 6% of H3K36 is found under the form of H3K36me1, 15% of H3K36me2 and 3% of H3K36me3. H3K27me2K36me1 is found in 15% of the proteins while H3k27me1K36me2 is not detected. H2BK143ub1 is probably prerequisite for H3K4me. Elevated H3K4me3 and H3K36me2 formed by ASHH2 are required for high FLC expression. Vernalization increases H3K9me2 and H3K27me2/3 and decreases H3K4me2 at the FLC locus, resulting in the epigenetic silencing of this floral repressor.</text>
</comment>
<comment type="PTM">
    <text evidence="5 10">In meta- and anaphase, H3T11ph is found on the entire length of the condensed chromosomes, whereas H3S10ph and H3S28ph are confined to the pericentromeric regions. During the first meiotic division, H3S10ph and H3S28ph are found on the entire length of the chromosome. Both sites may be involved in sister chromatid cohesion. No phosphorylation detected during interphase. AUR1 and AUR2 phosphorylate only H3S10, while AUR3 phosphorylates both H3S10 and H3S28.</text>
</comment>
<comment type="similarity">
    <text evidence="21">Belongs to the histone H3 family.</text>
</comment>
<comment type="caution">
    <text evidence="21">To ensure consistency between histone entries, we follow the 'Brno' nomenclature for histone modifications, with positions referring to those used in the literature for the 'closest' model organism. Due to slight variations in histone sequences between organisms and to the presence of initiator methionine in UniProtKB/Swiss-Prot sequences, the actual positions of modified amino acids in the sequence generally differ. In this entry the following conventions are used: H3K4me1/2/3 = mono-, di- and trimethylated Lys-5; H3K9me1/2/3 = mono-, di- and trimethylated Lys-10; H3K9ac = acetylated Lys-10; H3S10ph = phosphorylated Ser-11; H3T11ph = phosphorylated Thr-12; H3K14ac = acetylated Lys-15; H3K18ac = acetylated Lys-19; H3K18me1 = monomethylated Lys-19; H3K23ac = acetylated Lys-24; H3K23me1 = monomethylated Lys-24; H3K27me1/2/3 = mono-, di- and trimethylated Lys-28; H3S28ph = phosphorylated Ser-29; H3K36me1/2/3 = mono-, di- and trimethylated Lys-37.</text>
</comment>
<keyword id="KW-0002">3D-structure</keyword>
<keyword id="KW-0007">Acetylation</keyword>
<keyword id="KW-0025">Alternative splicing</keyword>
<keyword id="KW-0158">Chromosome</keyword>
<keyword id="KW-0238">DNA-binding</keyword>
<keyword id="KW-0488">Methylation</keyword>
<keyword id="KW-0544">Nucleosome core</keyword>
<keyword id="KW-0539">Nucleus</keyword>
<keyword id="KW-0597">Phosphoprotein</keyword>
<keyword id="KW-1185">Reference proteome</keyword>
<organism>
    <name type="scientific">Arabidopsis thaliana</name>
    <name type="common">Mouse-ear cress</name>
    <dbReference type="NCBI Taxonomy" id="3702"/>
    <lineage>
        <taxon>Eukaryota</taxon>
        <taxon>Viridiplantae</taxon>
        <taxon>Streptophyta</taxon>
        <taxon>Embryophyta</taxon>
        <taxon>Tracheophyta</taxon>
        <taxon>Spermatophyta</taxon>
        <taxon>Magnoliopsida</taxon>
        <taxon>eudicotyledons</taxon>
        <taxon>Gunneridae</taxon>
        <taxon>Pentapetalae</taxon>
        <taxon>rosids</taxon>
        <taxon>malvids</taxon>
        <taxon>Brassicales</taxon>
        <taxon>Brassicaceae</taxon>
        <taxon>Camelineae</taxon>
        <taxon>Arabidopsis</taxon>
    </lineage>
</organism>
<reference key="1">
    <citation type="journal article" date="1992" name="J. Mol. Biol.">
        <title>Genes encoding a histone H3.3-like variant in Arabidopsis contain intervening sequences.</title>
        <authorList>
            <person name="Chaubet N."/>
            <person name="Clement B."/>
            <person name="Gigot C."/>
        </authorList>
    </citation>
    <scope>NUCLEOTIDE SEQUENCE [GENOMIC DNA]</scope>
    <source>
        <strain>cv. Columbia</strain>
    </source>
</reference>
<reference key="2">
    <citation type="journal article" date="1999" name="Nature">
        <title>Sequence and analysis of chromosome 4 of the plant Arabidopsis thaliana.</title>
        <authorList>
            <person name="Mayer K.F.X."/>
            <person name="Schueller C."/>
            <person name="Wambutt R."/>
            <person name="Murphy G."/>
            <person name="Volckaert G."/>
            <person name="Pohl T."/>
            <person name="Duesterhoeft A."/>
            <person name="Stiekema W."/>
            <person name="Entian K.-D."/>
            <person name="Terryn N."/>
            <person name="Harris B."/>
            <person name="Ansorge W."/>
            <person name="Brandt P."/>
            <person name="Grivell L.A."/>
            <person name="Rieger M."/>
            <person name="Weichselgartner M."/>
            <person name="de Simone V."/>
            <person name="Obermaier B."/>
            <person name="Mache R."/>
            <person name="Mueller M."/>
            <person name="Kreis M."/>
            <person name="Delseny M."/>
            <person name="Puigdomenech P."/>
            <person name="Watson M."/>
            <person name="Schmidtheini T."/>
            <person name="Reichert B."/>
            <person name="Portetelle D."/>
            <person name="Perez-Alonso M."/>
            <person name="Boutry M."/>
            <person name="Bancroft I."/>
            <person name="Vos P."/>
            <person name="Hoheisel J."/>
            <person name="Zimmermann W."/>
            <person name="Wedler H."/>
            <person name="Ridley P."/>
            <person name="Langham S.-A."/>
            <person name="McCullagh B."/>
            <person name="Bilham L."/>
            <person name="Robben J."/>
            <person name="van der Schueren J."/>
            <person name="Grymonprez B."/>
            <person name="Chuang Y.-J."/>
            <person name="Vandenbussche F."/>
            <person name="Braeken M."/>
            <person name="Weltjens I."/>
            <person name="Voet M."/>
            <person name="Bastiaens I."/>
            <person name="Aert R."/>
            <person name="Defoor E."/>
            <person name="Weitzenegger T."/>
            <person name="Bothe G."/>
            <person name="Ramsperger U."/>
            <person name="Hilbert H."/>
            <person name="Braun M."/>
            <person name="Holzer E."/>
            <person name="Brandt A."/>
            <person name="Peters S."/>
            <person name="van Staveren M."/>
            <person name="Dirkse W."/>
            <person name="Mooijman P."/>
            <person name="Klein Lankhorst R."/>
            <person name="Rose M."/>
            <person name="Hauf J."/>
            <person name="Koetter P."/>
            <person name="Berneiser S."/>
            <person name="Hempel S."/>
            <person name="Feldpausch M."/>
            <person name="Lamberth S."/>
            <person name="Van den Daele H."/>
            <person name="De Keyser A."/>
            <person name="Buysshaert C."/>
            <person name="Gielen J."/>
            <person name="Villarroel R."/>
            <person name="De Clercq R."/>
            <person name="van Montagu M."/>
            <person name="Rogers J."/>
            <person name="Cronin A."/>
            <person name="Quail M.A."/>
            <person name="Bray-Allen S."/>
            <person name="Clark L."/>
            <person name="Doggett J."/>
            <person name="Hall S."/>
            <person name="Kay M."/>
            <person name="Lennard N."/>
            <person name="McLay K."/>
            <person name="Mayes R."/>
            <person name="Pettett A."/>
            <person name="Rajandream M.A."/>
            <person name="Lyne M."/>
            <person name="Benes V."/>
            <person name="Rechmann S."/>
            <person name="Borkova D."/>
            <person name="Bloecker H."/>
            <person name="Scharfe M."/>
            <person name="Grimm M."/>
            <person name="Loehnert T.-H."/>
            <person name="Dose S."/>
            <person name="de Haan M."/>
            <person name="Maarse A.C."/>
            <person name="Schaefer M."/>
            <person name="Mueller-Auer S."/>
            <person name="Gabel C."/>
            <person name="Fuchs M."/>
            <person name="Fartmann B."/>
            <person name="Granderath K."/>
            <person name="Dauner D."/>
            <person name="Herzl A."/>
            <person name="Neumann S."/>
            <person name="Argiriou A."/>
            <person name="Vitale D."/>
            <person name="Liguori R."/>
            <person name="Piravandi E."/>
            <person name="Massenet O."/>
            <person name="Quigley F."/>
            <person name="Clabauld G."/>
            <person name="Muendlein A."/>
            <person name="Felber R."/>
            <person name="Schnabl S."/>
            <person name="Hiller R."/>
            <person name="Schmidt W."/>
            <person name="Lecharny A."/>
            <person name="Aubourg S."/>
            <person name="Chefdor F."/>
            <person name="Cooke R."/>
            <person name="Berger C."/>
            <person name="Monfort A."/>
            <person name="Casacuberta E."/>
            <person name="Gibbons T."/>
            <person name="Weber N."/>
            <person name="Vandenbol M."/>
            <person name="Bargues M."/>
            <person name="Terol J."/>
            <person name="Torres A."/>
            <person name="Perez-Perez A."/>
            <person name="Purnelle B."/>
            <person name="Bent E."/>
            <person name="Johnson S."/>
            <person name="Tacon D."/>
            <person name="Jesse T."/>
            <person name="Heijnen L."/>
            <person name="Schwarz S."/>
            <person name="Scholler P."/>
            <person name="Heber S."/>
            <person name="Francs P."/>
            <person name="Bielke C."/>
            <person name="Frishman D."/>
            <person name="Haase D."/>
            <person name="Lemcke K."/>
            <person name="Mewes H.-W."/>
            <person name="Stocker S."/>
            <person name="Zaccaria P."/>
            <person name="Bevan M."/>
            <person name="Wilson R.K."/>
            <person name="de la Bastide M."/>
            <person name="Habermann K."/>
            <person name="Parnell L."/>
            <person name="Dedhia N."/>
            <person name="Gnoj L."/>
            <person name="Schutz K."/>
            <person name="Huang E."/>
            <person name="Spiegel L."/>
            <person name="Sekhon M."/>
            <person name="Murray J."/>
            <person name="Sheet P."/>
            <person name="Cordes M."/>
            <person name="Abu-Threideh J."/>
            <person name="Stoneking T."/>
            <person name="Kalicki J."/>
            <person name="Graves T."/>
            <person name="Harmon G."/>
            <person name="Edwards J."/>
            <person name="Latreille P."/>
            <person name="Courtney L."/>
            <person name="Cloud J."/>
            <person name="Abbott A."/>
            <person name="Scott K."/>
            <person name="Johnson D."/>
            <person name="Minx P."/>
            <person name="Bentley D."/>
            <person name="Fulton B."/>
            <person name="Miller N."/>
            <person name="Greco T."/>
            <person name="Kemp K."/>
            <person name="Kramer J."/>
            <person name="Fulton L."/>
            <person name="Mardis E."/>
            <person name="Dante M."/>
            <person name="Pepin K."/>
            <person name="Hillier L.W."/>
            <person name="Nelson J."/>
            <person name="Spieth J."/>
            <person name="Ryan E."/>
            <person name="Andrews S."/>
            <person name="Geisel C."/>
            <person name="Layman D."/>
            <person name="Du H."/>
            <person name="Ali J."/>
            <person name="Berghoff A."/>
            <person name="Jones K."/>
            <person name="Drone K."/>
            <person name="Cotton M."/>
            <person name="Joshu C."/>
            <person name="Antonoiu B."/>
            <person name="Zidanic M."/>
            <person name="Strong C."/>
            <person name="Sun H."/>
            <person name="Lamar B."/>
            <person name="Yordan C."/>
            <person name="Ma P."/>
            <person name="Zhong J."/>
            <person name="Preston R."/>
            <person name="Vil D."/>
            <person name="Shekher M."/>
            <person name="Matero A."/>
            <person name="Shah R."/>
            <person name="Swaby I.K."/>
            <person name="O'Shaughnessy A."/>
            <person name="Rodriguez M."/>
            <person name="Hoffman J."/>
            <person name="Till S."/>
            <person name="Granat S."/>
            <person name="Shohdy N."/>
            <person name="Hasegawa A."/>
            <person name="Hameed A."/>
            <person name="Lodhi M."/>
            <person name="Johnson A."/>
            <person name="Chen E."/>
            <person name="Marra M.A."/>
            <person name="Martienssen R."/>
            <person name="McCombie W.R."/>
        </authorList>
    </citation>
    <scope>NUCLEOTIDE SEQUENCE [LARGE SCALE GENOMIC DNA]</scope>
    <source>
        <strain>cv. Columbia</strain>
    </source>
</reference>
<reference key="3">
    <citation type="journal article" date="2000" name="Nature">
        <title>Sequence and analysis of chromosome 5 of the plant Arabidopsis thaliana.</title>
        <authorList>
            <person name="Tabata S."/>
            <person name="Kaneko T."/>
            <person name="Nakamura Y."/>
            <person name="Kotani H."/>
            <person name="Kato T."/>
            <person name="Asamizu E."/>
            <person name="Miyajima N."/>
            <person name="Sasamoto S."/>
            <person name="Kimura T."/>
            <person name="Hosouchi T."/>
            <person name="Kawashima K."/>
            <person name="Kohara M."/>
            <person name="Matsumoto M."/>
            <person name="Matsuno A."/>
            <person name="Muraki A."/>
            <person name="Nakayama S."/>
            <person name="Nakazaki N."/>
            <person name="Naruo K."/>
            <person name="Okumura S."/>
            <person name="Shinpo S."/>
            <person name="Takeuchi C."/>
            <person name="Wada T."/>
            <person name="Watanabe A."/>
            <person name="Yamada M."/>
            <person name="Yasuda M."/>
            <person name="Sato S."/>
            <person name="de la Bastide M."/>
            <person name="Huang E."/>
            <person name="Spiegel L."/>
            <person name="Gnoj L."/>
            <person name="O'Shaughnessy A."/>
            <person name="Preston R."/>
            <person name="Habermann K."/>
            <person name="Murray J."/>
            <person name="Johnson D."/>
            <person name="Rohlfing T."/>
            <person name="Nelson J."/>
            <person name="Stoneking T."/>
            <person name="Pepin K."/>
            <person name="Spieth J."/>
            <person name="Sekhon M."/>
            <person name="Armstrong J."/>
            <person name="Becker M."/>
            <person name="Belter E."/>
            <person name="Cordum H."/>
            <person name="Cordes M."/>
            <person name="Courtney L."/>
            <person name="Courtney W."/>
            <person name="Dante M."/>
            <person name="Du H."/>
            <person name="Edwards J."/>
            <person name="Fryman J."/>
            <person name="Haakensen B."/>
            <person name="Lamar E."/>
            <person name="Latreille P."/>
            <person name="Leonard S."/>
            <person name="Meyer R."/>
            <person name="Mulvaney E."/>
            <person name="Ozersky P."/>
            <person name="Riley A."/>
            <person name="Strowmatt C."/>
            <person name="Wagner-McPherson C."/>
            <person name="Wollam A."/>
            <person name="Yoakum M."/>
            <person name="Bell M."/>
            <person name="Dedhia N."/>
            <person name="Parnell L."/>
            <person name="Shah R."/>
            <person name="Rodriguez M."/>
            <person name="Hoon See L."/>
            <person name="Vil D."/>
            <person name="Baker J."/>
            <person name="Kirchoff K."/>
            <person name="Toth K."/>
            <person name="King L."/>
            <person name="Bahret A."/>
            <person name="Miller B."/>
            <person name="Marra M.A."/>
            <person name="Martienssen R."/>
            <person name="McCombie W.R."/>
            <person name="Wilson R.K."/>
            <person name="Murphy G."/>
            <person name="Bancroft I."/>
            <person name="Volckaert G."/>
            <person name="Wambutt R."/>
            <person name="Duesterhoeft A."/>
            <person name="Stiekema W."/>
            <person name="Pohl T."/>
            <person name="Entian K.-D."/>
            <person name="Terryn N."/>
            <person name="Hartley N."/>
            <person name="Bent E."/>
            <person name="Johnson S."/>
            <person name="Langham S.-A."/>
            <person name="McCullagh B."/>
            <person name="Robben J."/>
            <person name="Grymonprez B."/>
            <person name="Zimmermann W."/>
            <person name="Ramsperger U."/>
            <person name="Wedler H."/>
            <person name="Balke K."/>
            <person name="Wedler E."/>
            <person name="Peters S."/>
            <person name="van Staveren M."/>
            <person name="Dirkse W."/>
            <person name="Mooijman P."/>
            <person name="Klein Lankhorst R."/>
            <person name="Weitzenegger T."/>
            <person name="Bothe G."/>
            <person name="Rose M."/>
            <person name="Hauf J."/>
            <person name="Berneiser S."/>
            <person name="Hempel S."/>
            <person name="Feldpausch M."/>
            <person name="Lamberth S."/>
            <person name="Villarroel R."/>
            <person name="Gielen J."/>
            <person name="Ardiles W."/>
            <person name="Bents O."/>
            <person name="Lemcke K."/>
            <person name="Kolesov G."/>
            <person name="Mayer K.F.X."/>
            <person name="Rudd S."/>
            <person name="Schoof H."/>
            <person name="Schueller C."/>
            <person name="Zaccaria P."/>
            <person name="Mewes H.-W."/>
            <person name="Bevan M."/>
            <person name="Fransz P.F."/>
        </authorList>
    </citation>
    <scope>NUCLEOTIDE SEQUENCE [LARGE SCALE GENOMIC DNA]</scope>
    <source>
        <strain>cv. Columbia</strain>
    </source>
</reference>
<reference key="4">
    <citation type="journal article" date="2017" name="Plant J.">
        <title>Araport11: a complete reannotation of the Arabidopsis thaliana reference genome.</title>
        <authorList>
            <person name="Cheng C.Y."/>
            <person name="Krishnakumar V."/>
            <person name="Chan A.P."/>
            <person name="Thibaud-Nissen F."/>
            <person name="Schobel S."/>
            <person name="Town C.D."/>
        </authorList>
    </citation>
    <scope>GENOME REANNOTATION</scope>
    <source>
        <strain>cv. Columbia</strain>
    </source>
</reference>
<reference key="5">
    <citation type="journal article" date="2003" name="Science">
        <title>Empirical analysis of transcriptional activity in the Arabidopsis genome.</title>
        <authorList>
            <person name="Yamada K."/>
            <person name="Lim J."/>
            <person name="Dale J.M."/>
            <person name="Chen H."/>
            <person name="Shinn P."/>
            <person name="Palm C.J."/>
            <person name="Southwick A.M."/>
            <person name="Wu H.C."/>
            <person name="Kim C.J."/>
            <person name="Nguyen M."/>
            <person name="Pham P.K."/>
            <person name="Cheuk R.F."/>
            <person name="Karlin-Newmann G."/>
            <person name="Liu S.X."/>
            <person name="Lam B."/>
            <person name="Sakano H."/>
            <person name="Wu T."/>
            <person name="Yu G."/>
            <person name="Miranda M."/>
            <person name="Quach H.L."/>
            <person name="Tripp M."/>
            <person name="Chang C.H."/>
            <person name="Lee J.M."/>
            <person name="Toriumi M.J."/>
            <person name="Chan M.M."/>
            <person name="Tang C.C."/>
            <person name="Onodera C.S."/>
            <person name="Deng J.M."/>
            <person name="Akiyama K."/>
            <person name="Ansari Y."/>
            <person name="Arakawa T."/>
            <person name="Banh J."/>
            <person name="Banno F."/>
            <person name="Bowser L."/>
            <person name="Brooks S.Y."/>
            <person name="Carninci P."/>
            <person name="Chao Q."/>
            <person name="Choy N."/>
            <person name="Enju A."/>
            <person name="Goldsmith A.D."/>
            <person name="Gurjal M."/>
            <person name="Hansen N.F."/>
            <person name="Hayashizaki Y."/>
            <person name="Johnson-Hopson C."/>
            <person name="Hsuan V.W."/>
            <person name="Iida K."/>
            <person name="Karnes M."/>
            <person name="Khan S."/>
            <person name="Koesema E."/>
            <person name="Ishida J."/>
            <person name="Jiang P.X."/>
            <person name="Jones T."/>
            <person name="Kawai J."/>
            <person name="Kamiya A."/>
            <person name="Meyers C."/>
            <person name="Nakajima M."/>
            <person name="Narusaka M."/>
            <person name="Seki M."/>
            <person name="Sakurai T."/>
            <person name="Satou M."/>
            <person name="Tamse R."/>
            <person name="Vaysberg M."/>
            <person name="Wallender E.K."/>
            <person name="Wong C."/>
            <person name="Yamamura Y."/>
            <person name="Yuan S."/>
            <person name="Shinozaki K."/>
            <person name="Davis R.W."/>
            <person name="Theologis A."/>
            <person name="Ecker J.R."/>
        </authorList>
    </citation>
    <scope>NUCLEOTIDE SEQUENCE [LARGE SCALE MRNA]</scope>
    <source>
        <strain>cv. Columbia</strain>
    </source>
</reference>
<reference key="6">
    <citation type="submission" date="2002-03" db="EMBL/GenBank/DDBJ databases">
        <title>Full-length cDNA from Arabidopsis thaliana.</title>
        <authorList>
            <person name="Brover V.V."/>
            <person name="Troukhan M.E."/>
            <person name="Alexandrov N.A."/>
            <person name="Lu Y.-P."/>
            <person name="Flavell R.B."/>
            <person name="Feldmann K.A."/>
        </authorList>
    </citation>
    <scope>NUCLEOTIDE SEQUENCE [LARGE SCALE MRNA]</scope>
</reference>
<reference key="7">
    <citation type="submission" date="2006-05" db="EMBL/GenBank/DDBJ databases">
        <title>Arabidopsis ORF clones.</title>
        <authorList>
            <person name="Kim C.J."/>
            <person name="Chen H."/>
            <person name="Quinitio C."/>
            <person name="Shinn P."/>
            <person name="Ecker J.R."/>
        </authorList>
    </citation>
    <scope>NUCLEOTIDE SEQUENCE [LARGE SCALE MRNA]</scope>
    <source>
        <strain>cv. Columbia</strain>
    </source>
</reference>
<reference key="8">
    <citation type="journal article" date="2002" name="EMBO J.">
        <title>DNA methylation controls histone H3 lysine 9 methylation and heterochromatin assembly in Arabidopsis.</title>
        <authorList>
            <person name="Soppe W.J.J."/>
            <person name="Jasencakova Z."/>
            <person name="Houben A."/>
            <person name="Kakutani T."/>
            <person name="Meister A."/>
            <person name="Huang M.S."/>
            <person name="Jacobsen S.E."/>
            <person name="Schubert I."/>
            <person name="Fransz P.F."/>
        </authorList>
    </citation>
    <scope>METHYLATION AT LYS-10</scope>
</reference>
<reference key="9">
    <citation type="journal article" date="2003" name="Cytogenet. Genome Res.">
        <title>The temporal and spatial pattern of histone H3 phosphorylation at serine 28 and serine 10 is similar in plants but differs between mono- and polycentric chromosomes.</title>
        <authorList>
            <person name="Gernand D."/>
            <person name="Demidov D."/>
            <person name="Houben A."/>
        </authorList>
    </citation>
    <scope>PHOSPHORYLATION AT SER-11 AND SER-29</scope>
</reference>
<reference key="10">
    <citation type="journal article" date="2003" name="Plant J.">
        <title>Histone modifications in Arabidopsis -- high methylation of H3 lysine 9 is dispensable for constitutive heterochromatin.</title>
        <authorList>
            <person name="Jasencakova Z."/>
            <person name="Soppe W.J.J."/>
            <person name="Meister A."/>
            <person name="Gernand D."/>
            <person name="Turner B.M."/>
            <person name="Schubert I."/>
        </authorList>
    </citation>
    <scope>ACETYLATION AT LYS-10 AND LYS-19</scope>
    <scope>METHYLATION AT LYS-5 AND LYS-10</scope>
</reference>
<reference key="11">
    <citation type="journal article" date="2003" name="Plant Mol. Biol.">
        <title>Genome-wide gene expression in an Arabidopsis cell suspension.</title>
        <authorList>
            <person name="Menges M."/>
            <person name="Hennig L."/>
            <person name="Gruissem W."/>
            <person name="Murray J.A.H."/>
        </authorList>
    </citation>
    <scope>DEVELOPMENTAL STAGE</scope>
</reference>
<reference key="12">
    <citation type="journal article" date="2004" name="Chromosoma">
        <title>Dimethylation of histone H3 lysine 9 is a critical mark for DNA methylation and gene silencing in Arabidopsis thaliana.</title>
        <authorList>
            <person name="Jackson J.P."/>
            <person name="Johnson L."/>
            <person name="Jasencakova Z."/>
            <person name="Zhang X."/>
            <person name="PerezBurgos L."/>
            <person name="Singh P.B."/>
            <person name="Cheng X."/>
            <person name="Schubert I."/>
            <person name="Jenuwein T."/>
            <person name="Jacobsen S.E."/>
        </authorList>
    </citation>
    <scope>METHYLATION AT LYS-10</scope>
</reference>
<reference key="13">
    <citation type="journal article" date="2004" name="EMBO J.">
        <title>Dual histone H3 methylation marks at lysines 9 and 27 required for interaction with CHROMOMETHYLASE3.</title>
        <authorList>
            <person name="Lindroth A.M."/>
            <person name="Shultis D."/>
            <person name="Jasencakova Z."/>
            <person name="Fuchs J."/>
            <person name="Johnson L."/>
            <person name="Schubert D."/>
            <person name="Patnaik D."/>
            <person name="Pradhan S."/>
            <person name="Goodrich J."/>
            <person name="Schubert I."/>
            <person name="Jenuwein T."/>
            <person name="Khorasanizadeh S."/>
            <person name="Jacobsen S.E."/>
        </authorList>
    </citation>
    <scope>INTERACTION WITH CMT3</scope>
</reference>
<reference key="14">
    <citation type="journal article" date="2004" name="Mol. Cell">
        <title>A concerted DNA methylation/histone methylation switch regulates rRNA gene dosage control and nucleolar dominance.</title>
        <authorList>
            <person name="Lawrence R.J."/>
            <person name="Earley K."/>
            <person name="Pontes O."/>
            <person name="Silva M."/>
            <person name="Chen Z.J."/>
            <person name="Neves N."/>
            <person name="Viegas W."/>
            <person name="Pikaard C.S."/>
        </authorList>
    </citation>
    <scope>DEACETYLATION BY HDT1</scope>
</reference>
<reference key="15">
    <citation type="journal article" date="2004" name="Nucleic Acids Res.">
        <title>Mass spectrometry analysis of Arabidopsis histone H3 reveals distinct combinations of post-translational modifications.</title>
        <authorList>
            <person name="Johnson L."/>
            <person name="Mollah S."/>
            <person name="Garcia B.A."/>
            <person name="Muratore T.L."/>
            <person name="Shabanowitz J."/>
            <person name="Hunt D.F."/>
            <person name="Jacobsen S.E."/>
        </authorList>
    </citation>
    <scope>ACETYLATION AT LYS-10; LYS-15; LYS-19 AND LYS-24</scope>
    <scope>LACK OF ACETYLATION AT LYS-28 AND LYS-37</scope>
    <scope>METHYLATION AT LYS-5; LYS-10; LYS-19; LYS-24; LYS-28 AND LYS-37</scope>
    <scope>LACK OF METHYLATION AT LYS-15</scope>
    <scope>IDENTIFICATION BY MASS SPECTROMETRY</scope>
</reference>
<reference key="16">
    <citation type="journal article" date="2004" name="Nature">
        <title>Vernalization requires epigenetic silencing of FLC by histone methylation.</title>
        <authorList>
            <person name="Bastow R."/>
            <person name="Mylne J.S."/>
            <person name="Lister C."/>
            <person name="Lippman Z."/>
            <person name="Martienssen R.A."/>
            <person name="Dean C."/>
        </authorList>
    </citation>
    <scope>METHYLATION AT LYS-5; LYS-10 AND LYS-28</scope>
</reference>
<reference key="17">
    <citation type="journal article" date="2005" name="Plant Cell">
        <title>Establishment of the vernalization-responsive, winter-annual habit in Arabidopsis requires a putative histone H3 methyl transferase.</title>
        <authorList>
            <person name="Kim S.Y."/>
            <person name="He Y."/>
            <person name="Jacob Y."/>
            <person name="Noh Y.-S."/>
            <person name="Michaels S."/>
            <person name="Amasino R."/>
        </authorList>
    </citation>
    <scope>METHYLATION AT LYS-5</scope>
</reference>
<reference key="18">
    <citation type="journal article" date="2005" name="Nat. Cell Biol.">
        <title>Prevention of early flowering by expression of FLOWERING LOCUS C requires methylation of histone H3 K36.</title>
        <authorList>
            <person name="Zhao Z."/>
            <person name="Yu Y."/>
            <person name="Meyer D."/>
            <person name="Wu C."/>
            <person name="Shen W.-H."/>
        </authorList>
    </citation>
    <scope>METHYLATION AT LYS-37</scope>
</reference>
<reference key="19">
    <citation type="journal article" date="2005" name="Cytogenet. Genome Res.">
        <title>Novel phosphorylation of histone H3 at threonine 11 that temporally correlates with condensation of mitotic and meiotic chromosomes in plant cells.</title>
        <authorList>
            <person name="Houben A."/>
            <person name="Demidov D."/>
            <person name="Rutten T."/>
            <person name="Scheidtmann K.H."/>
        </authorList>
    </citation>
    <scope>PHOSPHORYLATION AT SER-11; THR-12 AND SER-29</scope>
</reference>
<reference key="20">
    <citation type="journal article" date="2005" name="Plant J.">
        <title>Analysis of the histone H3 gene family in Arabidopsis and identification of the male-gamete-specific variant AtMGH3.</title>
        <authorList>
            <person name="Okada T."/>
            <person name="Endo M."/>
            <person name="Singh M.B."/>
            <person name="Bhalla P.L."/>
        </authorList>
    </citation>
    <scope>IDENTIFICATION</scope>
    <scope>DEVELOPMENTAL STAGE</scope>
    <scope>TISSUE SPECIFICITY</scope>
</reference>
<reference key="21">
    <citation type="journal article" date="2006" name="Genes Dev.">
        <title>Erasure of histone acetylation by Arabidopsis HDA6 mediates large-scale gene silencing in nucleolar dominance.</title>
        <authorList>
            <person name="Earley K."/>
            <person name="Lawrence R.J."/>
            <person name="Pontes O."/>
            <person name="Reuther R."/>
            <person name="Enciso A.J."/>
            <person name="Silva M."/>
            <person name="Neves N."/>
            <person name="Gross M."/>
            <person name="Viegas W."/>
            <person name="Pikaard C.S."/>
        </authorList>
    </citation>
    <scope>ACETYLATION AT LYS-15 BY HAG1</scope>
    <scope>DEACETYLATION BY HDA6</scope>
</reference>
<reference key="22">
    <citation type="journal article" date="2006" name="Trends Plant Sci.">
        <title>Chromosomal histone modification patterns -- from conservation to diversity.</title>
        <authorList>
            <person name="Fuchs J."/>
            <person name="Demidov D."/>
            <person name="Houben A."/>
            <person name="Schubert I."/>
        </authorList>
    </citation>
    <scope>REVIEW</scope>
</reference>
<reference key="23">
    <citation type="journal article" date="2007" name="Curr. Biol.">
        <title>The PHD finger protein VRN5 functions in the epigenetic silencing of Arabidopsis FLC.</title>
        <authorList>
            <person name="Greb T."/>
            <person name="Mylne J.S."/>
            <person name="Crevillen P."/>
            <person name="Geraldo N."/>
            <person name="An H."/>
            <person name="Gendall A.R."/>
            <person name="Dean C."/>
        </authorList>
    </citation>
    <scope>ACETYLATION</scope>
    <scope>METHYLATION AT LYS-28</scope>
</reference>
<reference key="24">
    <citation type="journal article" date="2007" name="EMBO J.">
        <title>SKB1-mediated symmetric dimethylation of histone H4R3 controls flowering time in Arabidopsis.</title>
        <authorList>
            <person name="Wang X."/>
            <person name="Zhang Y."/>
            <person name="Ma Q."/>
            <person name="Zhang Z."/>
            <person name="Xue Y."/>
            <person name="Bao S."/>
            <person name="Chong K."/>
        </authorList>
    </citation>
    <scope>ACETYLATION AT LYS-15</scope>
</reference>
<reference key="25">
    <citation type="journal article" date="2007" name="PLoS Biol.">
        <title>Whole-genome analysis of histone H3 lysine 27 trimethylation in Arabidopsis.</title>
        <authorList>
            <person name="Zhang X."/>
            <person name="Clarenz O."/>
            <person name="Cokus S."/>
            <person name="Bernatavichute Y.V."/>
            <person name="Pellegrini M."/>
            <person name="Goodrich J."/>
            <person name="Jacobsen S.E."/>
        </authorList>
    </citation>
    <scope>METHYLATION AT LYS-28</scope>
    <scope>SUBCELLULAR LOCATION</scope>
</reference>
<reference key="26">
    <citation type="journal article" date="2013" name="Proc. Natl. Acad. Sci. U.S.A.">
        <title>Arabidopsis thaliana AHL family modulates hypocotyl growth redundantly by interacting with each other via the PPC/DUF296 domain.</title>
        <authorList>
            <person name="Zhao J."/>
            <person name="Favero D.S."/>
            <person name="Peng H."/>
            <person name="Neff M.M."/>
        </authorList>
    </citation>
    <scope>INTERACTION WITH AHL27</scope>
</reference>
<reference key="27">
    <citation type="journal article" date="2014" name="Biol. Open">
        <title>The HIRA complex that deposits the histone H3.3 is conserved in Arabidopsis and facilitates transcriptional dynamics.</title>
        <authorList>
            <person name="Nie X."/>
            <person name="Wang H."/>
            <person name="Li J."/>
            <person name="Holec S."/>
            <person name="Berger F."/>
        </authorList>
    </citation>
    <scope>INTERACTION WITH HIRA</scope>
    <scope>SUBCELLULAR LOCATION</scope>
    <source>
        <strain>cv. Columbia</strain>
    </source>
</reference>
<reference key="28">
    <citation type="journal article" date="2014" name="Science">
        <title>Selective methylation of histone H3 variant H3.1 regulates heterochromatin replication.</title>
        <authorList>
            <person name="Jacob Y."/>
            <person name="Bergamin E."/>
            <person name="Donoghue M.T."/>
            <person name="Mongeon V."/>
            <person name="LeBlanc C."/>
            <person name="Voigt P."/>
            <person name="Underwood C.J."/>
            <person name="Brunzelle J.S."/>
            <person name="Michaels S.D."/>
            <person name="Reinberg D."/>
            <person name="Couture J.F."/>
            <person name="Martienssen R.A."/>
        </authorList>
    </citation>
    <scope>MUTAGENESIS OF THR-32</scope>
    <scope>METHYLATION AT LYS-28</scope>
</reference>
<gene>
    <name type="primary">HTR4</name>
    <name type="ordered locus">At4g40030</name>
    <name type="ORF">T5J17.200</name>
</gene>
<gene>
    <name type="primary">HTR5</name>
    <name type="ordered locus">At4g40040</name>
    <name type="ORF">T5J17.210</name>
</gene>
<gene>
    <name type="primary">HTR8</name>
    <name type="ordered locus">At5g10980</name>
    <name type="ORF">T30N20_250</name>
    <name type="ORF">T5K6.6</name>
</gene>
<proteinExistence type="evidence at protein level"/>
<dbReference type="EMBL" id="X60429">
    <property type="protein sequence ID" value="CAA42958.1"/>
    <property type="molecule type" value="Genomic_DNA"/>
</dbReference>
<dbReference type="EMBL" id="X60429">
    <property type="protein sequence ID" value="CAA42957.1"/>
    <property type="molecule type" value="Genomic_DNA"/>
</dbReference>
<dbReference type="EMBL" id="AL161596">
    <property type="protein sequence ID" value="CAB80666.1"/>
    <property type="molecule type" value="Genomic_DNA"/>
</dbReference>
<dbReference type="EMBL" id="AL161596">
    <property type="protein sequence ID" value="CAB80667.1"/>
    <property type="molecule type" value="Genomic_DNA"/>
</dbReference>
<dbReference type="EMBL" id="AL035708">
    <property type="protein sequence ID" value="CAB38916.1"/>
    <property type="molecule type" value="Genomic_DNA"/>
</dbReference>
<dbReference type="EMBL" id="AL035708">
    <property type="protein sequence ID" value="CAB38917.1"/>
    <property type="molecule type" value="Genomic_DNA"/>
</dbReference>
<dbReference type="EMBL" id="AL365234">
    <property type="protein sequence ID" value="CAB96853.1"/>
    <property type="molecule type" value="Genomic_DNA"/>
</dbReference>
<dbReference type="EMBL" id="AL391222">
    <property type="status" value="NOT_ANNOTATED_CDS"/>
    <property type="molecule type" value="Genomic_DNA"/>
</dbReference>
<dbReference type="EMBL" id="CP002687">
    <property type="protein sequence ID" value="AEE87155.1"/>
    <property type="molecule type" value="Genomic_DNA"/>
</dbReference>
<dbReference type="EMBL" id="CP002687">
    <property type="protein sequence ID" value="AEE87157.1"/>
    <property type="molecule type" value="Genomic_DNA"/>
</dbReference>
<dbReference type="EMBL" id="CP002687">
    <property type="protein sequence ID" value="AEE87158.1"/>
    <property type="molecule type" value="Genomic_DNA"/>
</dbReference>
<dbReference type="EMBL" id="CP002687">
    <property type="protein sequence ID" value="AEE87159.1"/>
    <property type="molecule type" value="Genomic_DNA"/>
</dbReference>
<dbReference type="EMBL" id="CP002687">
    <property type="protein sequence ID" value="ANM66215.1"/>
    <property type="molecule type" value="Genomic_DNA"/>
</dbReference>
<dbReference type="EMBL" id="CP002687">
    <property type="protein sequence ID" value="ANM67333.1"/>
    <property type="molecule type" value="Genomic_DNA"/>
</dbReference>
<dbReference type="EMBL" id="CP002688">
    <property type="protein sequence ID" value="AED91617.1"/>
    <property type="molecule type" value="Genomic_DNA"/>
</dbReference>
<dbReference type="EMBL" id="AF385735">
    <property type="protein sequence ID" value="AAK60325.1"/>
    <property type="molecule type" value="mRNA"/>
</dbReference>
<dbReference type="EMBL" id="AY078027">
    <property type="protein sequence ID" value="AAL77728.1"/>
    <property type="molecule type" value="mRNA"/>
</dbReference>
<dbReference type="EMBL" id="AY070749">
    <property type="protein sequence ID" value="AAL50088.1"/>
    <property type="molecule type" value="mRNA"/>
</dbReference>
<dbReference type="EMBL" id="AY097375">
    <property type="protein sequence ID" value="AAM19891.1"/>
    <property type="molecule type" value="mRNA"/>
</dbReference>
<dbReference type="EMBL" id="BT002391">
    <property type="protein sequence ID" value="AAO00751.1"/>
    <property type="molecule type" value="mRNA"/>
</dbReference>
<dbReference type="EMBL" id="BT003326">
    <property type="protein sequence ID" value="AAO29945.1"/>
    <property type="molecule type" value="mRNA"/>
</dbReference>
<dbReference type="EMBL" id="AY086668">
    <property type="protein sequence ID" value="AAM63725.1"/>
    <property type="molecule type" value="mRNA"/>
</dbReference>
<dbReference type="EMBL" id="BT025499">
    <property type="protein sequence ID" value="ABF58917.1"/>
    <property type="molecule type" value="mRNA"/>
</dbReference>
<dbReference type="PIR" id="S24346">
    <property type="entry name" value="S24346"/>
</dbReference>
<dbReference type="RefSeq" id="NP_001031816.1">
    <molecule id="P59169-1"/>
    <property type="nucleotide sequence ID" value="NM_001036739.1"/>
</dbReference>
<dbReference type="RefSeq" id="NP_001078517.1">
    <molecule id="P59169-1"/>
    <property type="nucleotide sequence ID" value="NM_001085048.2"/>
</dbReference>
<dbReference type="RefSeq" id="NP_001328124.1">
    <molecule id="P59169-1"/>
    <property type="nucleotide sequence ID" value="NM_001342564.1"/>
</dbReference>
<dbReference type="RefSeq" id="NP_001329167.1">
    <molecule id="P59169-1"/>
    <property type="nucleotide sequence ID" value="NM_001342565.1"/>
</dbReference>
<dbReference type="RefSeq" id="NP_195713.1">
    <molecule id="P59169-1"/>
    <property type="nucleotide sequence ID" value="NM_120167.4"/>
</dbReference>
<dbReference type="RefSeq" id="NP_196659.1">
    <molecule id="P59169-1"/>
    <property type="nucleotide sequence ID" value="NM_121136.6"/>
</dbReference>
<dbReference type="RefSeq" id="NP_849529.1">
    <molecule id="P59169-1"/>
    <property type="nucleotide sequence ID" value="NM_179198.2"/>
</dbReference>
<dbReference type="PDB" id="4PL6">
    <property type="method" value="X-ray"/>
    <property type="resolution" value="1.68 A"/>
    <property type="chains" value="C/D=2-12"/>
</dbReference>
<dbReference type="PDB" id="4PLI">
    <property type="method" value="X-ray"/>
    <property type="resolution" value="1.65 A"/>
    <property type="chains" value="C/D=33-42"/>
</dbReference>
<dbReference type="PDB" id="4PLL">
    <property type="method" value="X-ray"/>
    <property type="resolution" value="2.60 A"/>
    <property type="chains" value="C/D=33-42"/>
</dbReference>
<dbReference type="PDB" id="7UX9">
    <property type="method" value="EM"/>
    <property type="resolution" value="3.20 A"/>
    <property type="chains" value="E/F=1-136"/>
</dbReference>
<dbReference type="PDB" id="8XAG">
    <property type="method" value="X-ray"/>
    <property type="resolution" value="1.75 A"/>
    <property type="chains" value="C/D=26-33"/>
</dbReference>
<dbReference type="PDBsum" id="4PL6"/>
<dbReference type="PDBsum" id="4PLI"/>
<dbReference type="PDBsum" id="4PLL"/>
<dbReference type="PDBsum" id="7UX9"/>
<dbReference type="PDBsum" id="8XAG"/>
<dbReference type="EMDB" id="EMD-26855"/>
<dbReference type="SMR" id="P59169"/>
<dbReference type="BioGRID" id="15444">
    <property type="interactions" value="17"/>
</dbReference>
<dbReference type="BioGRID" id="15445">
    <property type="interactions" value="12"/>
</dbReference>
<dbReference type="BioGRID" id="16243">
    <property type="interactions" value="10"/>
</dbReference>
<dbReference type="FunCoup" id="P59169">
    <property type="interactions" value="2538"/>
</dbReference>
<dbReference type="STRING" id="3702.P59169"/>
<dbReference type="iPTMnet" id="P59169"/>
<dbReference type="PaxDb" id="3702-AT4G40030.2"/>
<dbReference type="EnsemblPlants" id="AT4G40030.1">
    <molecule id="P59169-1"/>
    <property type="protein sequence ID" value="AT4G40030.1"/>
    <property type="gene ID" value="AT4G40030"/>
</dbReference>
<dbReference type="EnsemblPlants" id="AT4G40030.3">
    <molecule id="P59169-1"/>
    <property type="protein sequence ID" value="AT4G40030.3"/>
    <property type="gene ID" value="AT4G40030"/>
</dbReference>
<dbReference type="EnsemblPlants" id="AT4G40030.4">
    <molecule id="P59169-1"/>
    <property type="protein sequence ID" value="AT4G40030.4"/>
    <property type="gene ID" value="AT4G40030"/>
</dbReference>
<dbReference type="EnsemblPlants" id="AT4G40040.1">
    <molecule id="P59169-1"/>
    <property type="protein sequence ID" value="AT4G40040.1"/>
    <property type="gene ID" value="AT4G40040"/>
</dbReference>
<dbReference type="EnsemblPlants" id="AT4G40040.2">
    <molecule id="P59169-1"/>
    <property type="protein sequence ID" value="AT4G40040.2"/>
    <property type="gene ID" value="AT4G40040"/>
</dbReference>
<dbReference type="EnsemblPlants" id="AT4G40040.3">
    <molecule id="P59169-1"/>
    <property type="protein sequence ID" value="AT4G40040.3"/>
    <property type="gene ID" value="AT4G40040"/>
</dbReference>
<dbReference type="EnsemblPlants" id="AT5G10980.1">
    <molecule id="P59169-1"/>
    <property type="protein sequence ID" value="AT5G10980.1"/>
    <property type="gene ID" value="AT5G10980"/>
</dbReference>
<dbReference type="GeneID" id="830164"/>
<dbReference type="GeneID" id="830165"/>
<dbReference type="GeneID" id="830965"/>
<dbReference type="Gramene" id="AT4G40030.1">
    <molecule id="P59169-1"/>
    <property type="protein sequence ID" value="AT4G40030.1"/>
    <property type="gene ID" value="AT4G40030"/>
</dbReference>
<dbReference type="Gramene" id="AT4G40030.3">
    <molecule id="P59169-1"/>
    <property type="protein sequence ID" value="AT4G40030.3"/>
    <property type="gene ID" value="AT4G40030"/>
</dbReference>
<dbReference type="Gramene" id="AT4G40030.4">
    <molecule id="P59169-1"/>
    <property type="protein sequence ID" value="AT4G40030.4"/>
    <property type="gene ID" value="AT4G40030"/>
</dbReference>
<dbReference type="Gramene" id="AT4G40040.1">
    <molecule id="P59169-1"/>
    <property type="protein sequence ID" value="AT4G40040.1"/>
    <property type="gene ID" value="AT4G40040"/>
</dbReference>
<dbReference type="Gramene" id="AT4G40040.2">
    <molecule id="P59169-1"/>
    <property type="protein sequence ID" value="AT4G40040.2"/>
    <property type="gene ID" value="AT4G40040"/>
</dbReference>
<dbReference type="Gramene" id="AT4G40040.3">
    <molecule id="P59169-1"/>
    <property type="protein sequence ID" value="AT4G40040.3"/>
    <property type="gene ID" value="AT4G40040"/>
</dbReference>
<dbReference type="Gramene" id="AT5G10980.1">
    <molecule id="P59169-1"/>
    <property type="protein sequence ID" value="AT5G10980.1"/>
    <property type="gene ID" value="AT5G10980"/>
</dbReference>
<dbReference type="KEGG" id="ath:AT4G40030"/>
<dbReference type="KEGG" id="ath:AT4G40040"/>
<dbReference type="KEGG" id="ath:AT5G10980"/>
<dbReference type="Araport" id="AT4G40030"/>
<dbReference type="Araport" id="AT4G40040"/>
<dbReference type="Araport" id="AT5G10980"/>
<dbReference type="TAIR" id="AT4G40030">
    <property type="gene designation" value="H3.3"/>
</dbReference>
<dbReference type="TAIR" id="AT4G40040">
    <property type="gene designation" value="H3.3"/>
</dbReference>
<dbReference type="TAIR" id="AT5G10980">
    <property type="gene designation" value="H3.3"/>
</dbReference>
<dbReference type="eggNOG" id="KOG1745">
    <property type="taxonomic scope" value="Eukaryota"/>
</dbReference>
<dbReference type="HOGENOM" id="CLU_078295_4_0_1"/>
<dbReference type="InParanoid" id="P59169"/>
<dbReference type="OMA" id="HIFAEMA"/>
<dbReference type="OrthoDB" id="1854097at2759"/>
<dbReference type="PhylomeDB" id="P59169"/>
<dbReference type="CD-CODE" id="4299E36E">
    <property type="entry name" value="Nucleolus"/>
</dbReference>
<dbReference type="EvolutionaryTrace" id="P59169"/>
<dbReference type="PRO" id="PR:P59169"/>
<dbReference type="Proteomes" id="UP000006548">
    <property type="component" value="Chromosome 4"/>
</dbReference>
<dbReference type="Proteomes" id="UP000006548">
    <property type="component" value="Chromosome 5"/>
</dbReference>
<dbReference type="ExpressionAtlas" id="P59169">
    <property type="expression patterns" value="baseline and differential"/>
</dbReference>
<dbReference type="GO" id="GO:0005730">
    <property type="term" value="C:nucleolus"/>
    <property type="evidence" value="ECO:0000314"/>
    <property type="project" value="UniProtKB"/>
</dbReference>
<dbReference type="GO" id="GO:0000786">
    <property type="term" value="C:nucleosome"/>
    <property type="evidence" value="ECO:0007669"/>
    <property type="project" value="UniProtKB-KW"/>
</dbReference>
<dbReference type="GO" id="GO:0005634">
    <property type="term" value="C:nucleus"/>
    <property type="evidence" value="ECO:0000314"/>
    <property type="project" value="UniProtKB"/>
</dbReference>
<dbReference type="GO" id="GO:0005886">
    <property type="term" value="C:plasma membrane"/>
    <property type="evidence" value="ECO:0007005"/>
    <property type="project" value="TAIR"/>
</dbReference>
<dbReference type="GO" id="GO:0030875">
    <property type="term" value="C:rDNA protrusion"/>
    <property type="evidence" value="ECO:0000314"/>
    <property type="project" value="UniProtKB"/>
</dbReference>
<dbReference type="GO" id="GO:0003677">
    <property type="term" value="F:DNA binding"/>
    <property type="evidence" value="ECO:0007669"/>
    <property type="project" value="UniProtKB-KW"/>
</dbReference>
<dbReference type="GO" id="GO:0046982">
    <property type="term" value="F:protein heterodimerization activity"/>
    <property type="evidence" value="ECO:0007669"/>
    <property type="project" value="InterPro"/>
</dbReference>
<dbReference type="GO" id="GO:0030527">
    <property type="term" value="F:structural constituent of chromatin"/>
    <property type="evidence" value="ECO:0007669"/>
    <property type="project" value="InterPro"/>
</dbReference>
<dbReference type="CDD" id="cd22911">
    <property type="entry name" value="HFD_H3"/>
    <property type="match status" value="1"/>
</dbReference>
<dbReference type="FunFam" id="1.10.20.10:FF:000078">
    <property type="entry name" value="Histone H3"/>
    <property type="match status" value="1"/>
</dbReference>
<dbReference type="FunFam" id="1.10.20.10:FF:000044">
    <property type="entry name" value="Histone H3.3"/>
    <property type="match status" value="1"/>
</dbReference>
<dbReference type="Gene3D" id="1.10.20.10">
    <property type="entry name" value="Histone, subunit A"/>
    <property type="match status" value="1"/>
</dbReference>
<dbReference type="InterPro" id="IPR009072">
    <property type="entry name" value="Histone-fold"/>
</dbReference>
<dbReference type="InterPro" id="IPR007125">
    <property type="entry name" value="Histone_H2A/H2B/H3"/>
</dbReference>
<dbReference type="InterPro" id="IPR000164">
    <property type="entry name" value="Histone_H3/CENP-A"/>
</dbReference>
<dbReference type="PANTHER" id="PTHR11426">
    <property type="entry name" value="HISTONE H3"/>
    <property type="match status" value="1"/>
</dbReference>
<dbReference type="Pfam" id="PF00125">
    <property type="entry name" value="Histone"/>
    <property type="match status" value="1"/>
</dbReference>
<dbReference type="PRINTS" id="PR00622">
    <property type="entry name" value="HISTONEH3"/>
</dbReference>
<dbReference type="SMART" id="SM00428">
    <property type="entry name" value="H3"/>
    <property type="match status" value="1"/>
</dbReference>
<dbReference type="SUPFAM" id="SSF47113">
    <property type="entry name" value="Histone-fold"/>
    <property type="match status" value="1"/>
</dbReference>
<dbReference type="PROSITE" id="PS00322">
    <property type="entry name" value="HISTONE_H3_1"/>
    <property type="match status" value="1"/>
</dbReference>
<dbReference type="PROSITE" id="PS00959">
    <property type="entry name" value="HISTONE_H3_2"/>
    <property type="match status" value="1"/>
</dbReference>
<feature type="chain" id="PRO_0000221268" description="Histone H3.3">
    <location>
        <begin position="1"/>
        <end position="136"/>
    </location>
</feature>
<feature type="region of interest" description="Disordered" evidence="2">
    <location>
        <begin position="1"/>
        <end position="43"/>
    </location>
</feature>
<feature type="site" description="Not N6-methylated" evidence="9">
    <location>
        <position position="15"/>
    </location>
</feature>
<feature type="site" description="Not N6-acetylated" evidence="9">
    <location>
        <position position="28"/>
    </location>
</feature>
<feature type="site" description="Impaired recognition by ATXR5 and ATXR6" evidence="19">
    <location>
        <position position="32"/>
    </location>
</feature>
<feature type="site" description="Not N6-acetylated" evidence="9">
    <location>
        <position position="37"/>
    </location>
</feature>
<feature type="modified residue" description="N6,N6,N6-trimethyllysine; alternate" evidence="4 6 9 11">
    <location>
        <position position="5"/>
    </location>
</feature>
<feature type="modified residue" description="N6,N6-dimethyllysine; alternate" evidence="4 6 9 11">
    <location>
        <position position="5"/>
    </location>
</feature>
<feature type="modified residue" description="N6-methyllysine; alternate" evidence="4 6 9 11">
    <location>
        <position position="5"/>
    </location>
</feature>
<feature type="modified residue" description="N6,N6,N6-trimethyllysine; alternate" evidence="3 4 6 8 9">
    <location>
        <position position="10"/>
    </location>
</feature>
<feature type="modified residue" description="N6,N6-dimethyllysine; alternate" evidence="3 4 6 8 9">
    <location>
        <position position="10"/>
    </location>
</feature>
<feature type="modified residue" description="N6-acetyllysine; alternate" evidence="4 9">
    <location>
        <position position="10"/>
    </location>
</feature>
<feature type="modified residue" description="N6-methyllysine; alternate" evidence="3 4 6 8 9">
    <location>
        <position position="10"/>
    </location>
</feature>
<feature type="modified residue" description="Phosphoserine" evidence="5 10">
    <location>
        <position position="11"/>
    </location>
</feature>
<feature type="modified residue" description="Phosphothreonine" evidence="10">
    <location>
        <position position="12"/>
    </location>
</feature>
<feature type="modified residue" description="N6-acetyllysine" evidence="9 14 16">
    <location>
        <position position="15"/>
    </location>
</feature>
<feature type="modified residue" description="N6-acetyllysine; alternate" evidence="4 9">
    <location>
        <position position="19"/>
    </location>
</feature>
<feature type="modified residue" description="N6-methyllysine; alternate" evidence="9">
    <location>
        <position position="19"/>
    </location>
</feature>
<feature type="modified residue" description="N6-acetyllysine; alternate" evidence="9">
    <location>
        <position position="24"/>
    </location>
</feature>
<feature type="modified residue" description="N6-methyllysine; alternate" evidence="9">
    <location>
        <position position="24"/>
    </location>
</feature>
<feature type="modified residue" description="N6,N6,N6-trimethyllysine; alternate" evidence="1">
    <location>
        <position position="28"/>
    </location>
</feature>
<feature type="modified residue" description="N6,N6-dimethyllysine; alternate" evidence="6 9 15 17 19">
    <location>
        <position position="28"/>
    </location>
</feature>
<feature type="modified residue" description="N6-methyllysine; alternate" evidence="6 9 15 17 19">
    <location>
        <position position="28"/>
    </location>
</feature>
<feature type="modified residue" description="Phosphoserine" evidence="5 10">
    <location>
        <position position="29"/>
    </location>
</feature>
<feature type="modified residue" description="N6,N6,N6-trimethyllysine; alternate" evidence="9 13">
    <location>
        <position position="37"/>
    </location>
</feature>
<feature type="modified residue" description="N6,N6-dimethyllysine; alternate" evidence="9 13">
    <location>
        <position position="37"/>
    </location>
</feature>
<feature type="modified residue" description="N6-methyllysine; alternate" evidence="9 13">
    <location>
        <position position="37"/>
    </location>
</feature>
<feature type="mutagenesis site" description="H3K27me1 methylation by ATXR5/6 restored." evidence="19">
    <original>T</original>
    <variation>A</variation>
    <location>
        <position position="32"/>
    </location>
</feature>
<feature type="helix" evidence="22">
    <location>
        <begin position="46"/>
        <end position="55"/>
    </location>
</feature>
<feature type="helix" evidence="22">
    <location>
        <begin position="65"/>
        <end position="76"/>
    </location>
</feature>
<feature type="turn" evidence="22">
    <location>
        <begin position="77"/>
        <end position="79"/>
    </location>
</feature>
<feature type="strand" evidence="22">
    <location>
        <begin position="80"/>
        <end position="82"/>
    </location>
</feature>
<feature type="helix" evidence="22">
    <location>
        <begin position="87"/>
        <end position="114"/>
    </location>
</feature>
<feature type="helix" evidence="22">
    <location>
        <begin position="122"/>
        <end position="131"/>
    </location>
</feature>
<sequence>MARTKQTARKSTGGKAPRKQLATKAARKSAPTTGGVKKPHRYRPGTVALREIRKYQKSTELLIRKLPFQRLVREIAQDFKTDLRFQSHAVLALQEAAEAYLVGLFEDTNLCAIHAKRVTIMPKDIQLARRIRGERA</sequence>
<protein>
    <recommendedName>
        <fullName>Histone H3.3</fullName>
    </recommendedName>
    <alternativeName>
        <fullName>Histone H3.2</fullName>
    </alternativeName>
</protein>
<name>H33_ARATH</name>
<accession>P59169</accession>
<accession>Q6NR95</accession>
<evidence type="ECO:0000250" key="1">
    <source>
        <dbReference type="UniProtKB" id="P59226"/>
    </source>
</evidence>
<evidence type="ECO:0000256" key="2">
    <source>
        <dbReference type="SAM" id="MobiDB-lite"/>
    </source>
</evidence>
<evidence type="ECO:0000269" key="3">
    <source>
    </source>
</evidence>
<evidence type="ECO:0000269" key="4">
    <source>
    </source>
</evidence>
<evidence type="ECO:0000269" key="5">
    <source>
    </source>
</evidence>
<evidence type="ECO:0000269" key="6">
    <source>
    </source>
</evidence>
<evidence type="ECO:0000269" key="7">
    <source>
    </source>
</evidence>
<evidence type="ECO:0000269" key="8">
    <source>
    </source>
</evidence>
<evidence type="ECO:0000269" key="9">
    <source>
    </source>
</evidence>
<evidence type="ECO:0000269" key="10">
    <source>
    </source>
</evidence>
<evidence type="ECO:0000269" key="11">
    <source>
    </source>
</evidence>
<evidence type="ECO:0000269" key="12">
    <source>
    </source>
</evidence>
<evidence type="ECO:0000269" key="13">
    <source>
    </source>
</evidence>
<evidence type="ECO:0000269" key="14">
    <source>
    </source>
</evidence>
<evidence type="ECO:0000269" key="15">
    <source>
    </source>
</evidence>
<evidence type="ECO:0000269" key="16">
    <source>
    </source>
</evidence>
<evidence type="ECO:0000269" key="17">
    <source>
    </source>
</evidence>
<evidence type="ECO:0000269" key="18">
    <source>
    </source>
</evidence>
<evidence type="ECO:0000269" key="19">
    <source>
    </source>
</evidence>
<evidence type="ECO:0000269" key="20">
    <source>
    </source>
</evidence>
<evidence type="ECO:0000305" key="21"/>
<evidence type="ECO:0007829" key="22">
    <source>
        <dbReference type="PDB" id="7UX9"/>
    </source>
</evidence>